<accession>Q8U7H5</accession>
<organism>
    <name type="scientific">Agrobacterium fabrum (strain C58 / ATCC 33970)</name>
    <name type="common">Agrobacterium tumefaciens (strain C58)</name>
    <dbReference type="NCBI Taxonomy" id="176299"/>
    <lineage>
        <taxon>Bacteria</taxon>
        <taxon>Pseudomonadati</taxon>
        <taxon>Pseudomonadota</taxon>
        <taxon>Alphaproteobacteria</taxon>
        <taxon>Hyphomicrobiales</taxon>
        <taxon>Rhizobiaceae</taxon>
        <taxon>Rhizobium/Agrobacterium group</taxon>
        <taxon>Agrobacterium</taxon>
        <taxon>Agrobacterium tumefaciens complex</taxon>
    </lineage>
</organism>
<proteinExistence type="inferred from homology"/>
<reference key="1">
    <citation type="journal article" date="2001" name="Science">
        <title>The genome of the natural genetic engineer Agrobacterium tumefaciens C58.</title>
        <authorList>
            <person name="Wood D.W."/>
            <person name="Setubal J.C."/>
            <person name="Kaul R."/>
            <person name="Monks D.E."/>
            <person name="Kitajima J.P."/>
            <person name="Okura V.K."/>
            <person name="Zhou Y."/>
            <person name="Chen L."/>
            <person name="Wood G.E."/>
            <person name="Almeida N.F. Jr."/>
            <person name="Woo L."/>
            <person name="Chen Y."/>
            <person name="Paulsen I.T."/>
            <person name="Eisen J.A."/>
            <person name="Karp P.D."/>
            <person name="Bovee D. Sr."/>
            <person name="Chapman P."/>
            <person name="Clendenning J."/>
            <person name="Deatherage G."/>
            <person name="Gillet W."/>
            <person name="Grant C."/>
            <person name="Kutyavin T."/>
            <person name="Levy R."/>
            <person name="Li M.-J."/>
            <person name="McClelland E."/>
            <person name="Palmieri A."/>
            <person name="Raymond C."/>
            <person name="Rouse G."/>
            <person name="Saenphimmachak C."/>
            <person name="Wu Z."/>
            <person name="Romero P."/>
            <person name="Gordon D."/>
            <person name="Zhang S."/>
            <person name="Yoo H."/>
            <person name="Tao Y."/>
            <person name="Biddle P."/>
            <person name="Jung M."/>
            <person name="Krespan W."/>
            <person name="Perry M."/>
            <person name="Gordon-Kamm B."/>
            <person name="Liao L."/>
            <person name="Kim S."/>
            <person name="Hendrick C."/>
            <person name="Zhao Z.-Y."/>
            <person name="Dolan M."/>
            <person name="Chumley F."/>
            <person name="Tingey S.V."/>
            <person name="Tomb J.-F."/>
            <person name="Gordon M.P."/>
            <person name="Olson M.V."/>
            <person name="Nester E.W."/>
        </authorList>
    </citation>
    <scope>NUCLEOTIDE SEQUENCE [LARGE SCALE GENOMIC DNA]</scope>
    <source>
        <strain>C58 / ATCC 33970</strain>
    </source>
</reference>
<reference key="2">
    <citation type="journal article" date="2001" name="Science">
        <title>Genome sequence of the plant pathogen and biotechnology agent Agrobacterium tumefaciens C58.</title>
        <authorList>
            <person name="Goodner B."/>
            <person name="Hinkle G."/>
            <person name="Gattung S."/>
            <person name="Miller N."/>
            <person name="Blanchard M."/>
            <person name="Qurollo B."/>
            <person name="Goldman B.S."/>
            <person name="Cao Y."/>
            <person name="Askenazi M."/>
            <person name="Halling C."/>
            <person name="Mullin L."/>
            <person name="Houmiel K."/>
            <person name="Gordon J."/>
            <person name="Vaudin M."/>
            <person name="Iartchouk O."/>
            <person name="Epp A."/>
            <person name="Liu F."/>
            <person name="Wollam C."/>
            <person name="Allinger M."/>
            <person name="Doughty D."/>
            <person name="Scott C."/>
            <person name="Lappas C."/>
            <person name="Markelz B."/>
            <person name="Flanagan C."/>
            <person name="Crowell C."/>
            <person name="Gurson J."/>
            <person name="Lomo C."/>
            <person name="Sear C."/>
            <person name="Strub G."/>
            <person name="Cielo C."/>
            <person name="Slater S."/>
        </authorList>
    </citation>
    <scope>NUCLEOTIDE SEQUENCE [LARGE SCALE GENOMIC DNA]</scope>
    <source>
        <strain>C58 / ATCC 33970</strain>
    </source>
</reference>
<sequence length="485" mass="54228">MTTSGVRVRIAPSPTGEPHVGTAYIALFNYLFAKKHGGEFILRIEDTDATRSTLEYEQKVLEALRWTGLTWSEGPDVGGPYGPYRQSERKPMYWPYAEELLEKGHAFRCFCTPERLEQMREAQRAAGKPPKYDGLCLHLKAEEVTTRVAAGEANVVRMKIPTEGSCDFHDGVYGDVSIPWDSVDMQVLIKADGMPTYHMANVIDDHLMKITHVARGEEWLASVPKHILLYRYFGWDQPTFMHLSLMRNADKSKLSKRKNPTSISYYSALGYLPEALMNFLGLFFIQIAEGEELLTMEELAAKFDPEALSKAGAIFDIQKLDWLNGRWLREKLTPEDFIARTLEWAMENSRLTEGLKLAQSRISKLGELPNLAGFLVSSDVGLTPASFAGLKSKPEEIHEILTTVAADLEKMPDWNVEAIEAELRDIAERTGKKLRVVTPPLFVAVSGSSRSLPLFDSMALLGRSVVRQRLKVAIAVVATMVGSGS</sequence>
<gene>
    <name evidence="1" type="primary">gltX</name>
    <name type="ordered locus">Atu4474</name>
    <name type="ORF">AGR_L_791</name>
</gene>
<evidence type="ECO:0000255" key="1">
    <source>
        <dbReference type="HAMAP-Rule" id="MF_00022"/>
    </source>
</evidence>
<keyword id="KW-0030">Aminoacyl-tRNA synthetase</keyword>
<keyword id="KW-0067">ATP-binding</keyword>
<keyword id="KW-0963">Cytoplasm</keyword>
<keyword id="KW-0436">Ligase</keyword>
<keyword id="KW-0479">Metal-binding</keyword>
<keyword id="KW-0547">Nucleotide-binding</keyword>
<keyword id="KW-0648">Protein biosynthesis</keyword>
<keyword id="KW-1185">Reference proteome</keyword>
<keyword id="KW-0862">Zinc</keyword>
<protein>
    <recommendedName>
        <fullName evidence="1">Glutamate--tRNA ligase</fullName>
        <ecNumber evidence="1">6.1.1.17</ecNumber>
    </recommendedName>
    <alternativeName>
        <fullName evidence="1">Glutamyl-tRNA synthetase</fullName>
        <shortName evidence="1">GluRS</shortName>
    </alternativeName>
</protein>
<comment type="function">
    <text evidence="1">Catalyzes the attachment of glutamate to tRNA(Glu) in a two-step reaction: glutamate is first activated by ATP to form Glu-AMP and then transferred to the acceptor end of tRNA(Glu).</text>
</comment>
<comment type="catalytic activity">
    <reaction evidence="1">
        <text>tRNA(Glu) + L-glutamate + ATP = L-glutamyl-tRNA(Glu) + AMP + diphosphate</text>
        <dbReference type="Rhea" id="RHEA:23540"/>
        <dbReference type="Rhea" id="RHEA-COMP:9663"/>
        <dbReference type="Rhea" id="RHEA-COMP:9680"/>
        <dbReference type="ChEBI" id="CHEBI:29985"/>
        <dbReference type="ChEBI" id="CHEBI:30616"/>
        <dbReference type="ChEBI" id="CHEBI:33019"/>
        <dbReference type="ChEBI" id="CHEBI:78442"/>
        <dbReference type="ChEBI" id="CHEBI:78520"/>
        <dbReference type="ChEBI" id="CHEBI:456215"/>
        <dbReference type="EC" id="6.1.1.17"/>
    </reaction>
</comment>
<comment type="cofactor">
    <cofactor evidence="1">
        <name>Zn(2+)</name>
        <dbReference type="ChEBI" id="CHEBI:29105"/>
    </cofactor>
    <text evidence="1">Binds 1 zinc ion per subunit.</text>
</comment>
<comment type="subunit">
    <text evidence="1">Monomer.</text>
</comment>
<comment type="subcellular location">
    <subcellularLocation>
        <location evidence="1">Cytoplasm</location>
    </subcellularLocation>
</comment>
<comment type="similarity">
    <text evidence="1">Belongs to the class-I aminoacyl-tRNA synthetase family. Glutamate--tRNA ligase type 1 subfamily.</text>
</comment>
<name>SYE_AGRFC</name>
<feature type="chain" id="PRO_0000119491" description="Glutamate--tRNA ligase">
    <location>
        <begin position="1"/>
        <end position="485"/>
    </location>
</feature>
<feature type="short sequence motif" description="'HIGH' region" evidence="1">
    <location>
        <begin position="12"/>
        <end position="22"/>
    </location>
</feature>
<feature type="short sequence motif" description="'KMSKS' region" evidence="1">
    <location>
        <begin position="253"/>
        <end position="257"/>
    </location>
</feature>
<feature type="binding site" evidence="1">
    <location>
        <position position="109"/>
    </location>
    <ligand>
        <name>Zn(2+)</name>
        <dbReference type="ChEBI" id="CHEBI:29105"/>
    </ligand>
</feature>
<feature type="binding site" evidence="1">
    <location>
        <position position="111"/>
    </location>
    <ligand>
        <name>Zn(2+)</name>
        <dbReference type="ChEBI" id="CHEBI:29105"/>
    </ligand>
</feature>
<feature type="binding site" evidence="1">
    <location>
        <position position="136"/>
    </location>
    <ligand>
        <name>Zn(2+)</name>
        <dbReference type="ChEBI" id="CHEBI:29105"/>
    </ligand>
</feature>
<feature type="binding site" evidence="1">
    <location>
        <position position="138"/>
    </location>
    <ligand>
        <name>Zn(2+)</name>
        <dbReference type="ChEBI" id="CHEBI:29105"/>
    </ligand>
</feature>
<feature type="binding site" evidence="1">
    <location>
        <position position="256"/>
    </location>
    <ligand>
        <name>ATP</name>
        <dbReference type="ChEBI" id="CHEBI:30616"/>
    </ligand>
</feature>
<dbReference type="EC" id="6.1.1.17" evidence="1"/>
<dbReference type="EMBL" id="AE007870">
    <property type="protein sequence ID" value="AAK88968.2"/>
    <property type="molecule type" value="Genomic_DNA"/>
</dbReference>
<dbReference type="PIR" id="AF3106">
    <property type="entry name" value="AF3106"/>
</dbReference>
<dbReference type="PIR" id="F98180">
    <property type="entry name" value="F98180"/>
</dbReference>
<dbReference type="RefSeq" id="NP_356183.2">
    <property type="nucleotide sequence ID" value="NC_003063.2"/>
</dbReference>
<dbReference type="RefSeq" id="WP_010973882.1">
    <property type="nucleotide sequence ID" value="NC_003063.2"/>
</dbReference>
<dbReference type="SMR" id="Q8U7H5"/>
<dbReference type="STRING" id="176299.Atu4474"/>
<dbReference type="EnsemblBacteria" id="AAK88968">
    <property type="protein sequence ID" value="AAK88968"/>
    <property type="gene ID" value="Atu4474"/>
</dbReference>
<dbReference type="GeneID" id="1136348"/>
<dbReference type="KEGG" id="atu:Atu4474"/>
<dbReference type="PATRIC" id="fig|176299.10.peg.4282"/>
<dbReference type="eggNOG" id="COG0008">
    <property type="taxonomic scope" value="Bacteria"/>
</dbReference>
<dbReference type="HOGENOM" id="CLU_015768_6_3_5"/>
<dbReference type="OrthoDB" id="9807503at2"/>
<dbReference type="PhylomeDB" id="Q8U7H5"/>
<dbReference type="BioCyc" id="AGRO:ATU4474-MONOMER"/>
<dbReference type="Proteomes" id="UP000000813">
    <property type="component" value="Chromosome linear"/>
</dbReference>
<dbReference type="GO" id="GO:0005829">
    <property type="term" value="C:cytosol"/>
    <property type="evidence" value="ECO:0007669"/>
    <property type="project" value="TreeGrafter"/>
</dbReference>
<dbReference type="GO" id="GO:0005524">
    <property type="term" value="F:ATP binding"/>
    <property type="evidence" value="ECO:0007669"/>
    <property type="project" value="UniProtKB-UniRule"/>
</dbReference>
<dbReference type="GO" id="GO:0004818">
    <property type="term" value="F:glutamate-tRNA ligase activity"/>
    <property type="evidence" value="ECO:0007669"/>
    <property type="project" value="UniProtKB-UniRule"/>
</dbReference>
<dbReference type="GO" id="GO:0000049">
    <property type="term" value="F:tRNA binding"/>
    <property type="evidence" value="ECO:0007669"/>
    <property type="project" value="InterPro"/>
</dbReference>
<dbReference type="GO" id="GO:0008270">
    <property type="term" value="F:zinc ion binding"/>
    <property type="evidence" value="ECO:0007669"/>
    <property type="project" value="UniProtKB-UniRule"/>
</dbReference>
<dbReference type="GO" id="GO:0006424">
    <property type="term" value="P:glutamyl-tRNA aminoacylation"/>
    <property type="evidence" value="ECO:0007669"/>
    <property type="project" value="UniProtKB-UniRule"/>
</dbReference>
<dbReference type="CDD" id="cd00808">
    <property type="entry name" value="GluRS_core"/>
    <property type="match status" value="1"/>
</dbReference>
<dbReference type="FunFam" id="3.40.50.620:FF:000045">
    <property type="entry name" value="Glutamate--tRNA ligase, mitochondrial"/>
    <property type="match status" value="1"/>
</dbReference>
<dbReference type="Gene3D" id="1.10.10.350">
    <property type="match status" value="1"/>
</dbReference>
<dbReference type="Gene3D" id="3.40.50.620">
    <property type="entry name" value="HUPs"/>
    <property type="match status" value="1"/>
</dbReference>
<dbReference type="HAMAP" id="MF_00022">
    <property type="entry name" value="Glu_tRNA_synth_type1"/>
    <property type="match status" value="1"/>
</dbReference>
<dbReference type="InterPro" id="IPR045462">
    <property type="entry name" value="aa-tRNA-synth_I_cd-bd"/>
</dbReference>
<dbReference type="InterPro" id="IPR020751">
    <property type="entry name" value="aa-tRNA-synth_I_codon-bd_sub2"/>
</dbReference>
<dbReference type="InterPro" id="IPR001412">
    <property type="entry name" value="aa-tRNA-synth_I_CS"/>
</dbReference>
<dbReference type="InterPro" id="IPR008925">
    <property type="entry name" value="aa_tRNA-synth_I_cd-bd_sf"/>
</dbReference>
<dbReference type="InterPro" id="IPR004527">
    <property type="entry name" value="Glu-tRNA-ligase_bac/mito"/>
</dbReference>
<dbReference type="InterPro" id="IPR000924">
    <property type="entry name" value="Glu/Gln-tRNA-synth"/>
</dbReference>
<dbReference type="InterPro" id="IPR020058">
    <property type="entry name" value="Glu/Gln-tRNA-synth_Ib_cat-dom"/>
</dbReference>
<dbReference type="InterPro" id="IPR049940">
    <property type="entry name" value="GluQ/Sye"/>
</dbReference>
<dbReference type="InterPro" id="IPR033910">
    <property type="entry name" value="GluRS_core"/>
</dbReference>
<dbReference type="InterPro" id="IPR014729">
    <property type="entry name" value="Rossmann-like_a/b/a_fold"/>
</dbReference>
<dbReference type="NCBIfam" id="TIGR00464">
    <property type="entry name" value="gltX_bact"/>
    <property type="match status" value="1"/>
</dbReference>
<dbReference type="PANTHER" id="PTHR43311">
    <property type="entry name" value="GLUTAMATE--TRNA LIGASE"/>
    <property type="match status" value="1"/>
</dbReference>
<dbReference type="PANTHER" id="PTHR43311:SF2">
    <property type="entry name" value="GLUTAMATE--TRNA LIGASE, MITOCHONDRIAL-RELATED"/>
    <property type="match status" value="1"/>
</dbReference>
<dbReference type="Pfam" id="PF19269">
    <property type="entry name" value="Anticodon_2"/>
    <property type="match status" value="1"/>
</dbReference>
<dbReference type="Pfam" id="PF00749">
    <property type="entry name" value="tRNA-synt_1c"/>
    <property type="match status" value="1"/>
</dbReference>
<dbReference type="PRINTS" id="PR00987">
    <property type="entry name" value="TRNASYNTHGLU"/>
</dbReference>
<dbReference type="SUPFAM" id="SSF48163">
    <property type="entry name" value="An anticodon-binding domain of class I aminoacyl-tRNA synthetases"/>
    <property type="match status" value="1"/>
</dbReference>
<dbReference type="SUPFAM" id="SSF52374">
    <property type="entry name" value="Nucleotidylyl transferase"/>
    <property type="match status" value="1"/>
</dbReference>
<dbReference type="PROSITE" id="PS00178">
    <property type="entry name" value="AA_TRNA_LIGASE_I"/>
    <property type="match status" value="1"/>
</dbReference>